<comment type="function">
    <text evidence="1">Catalyzes the formation of S-adenosylmethionine (AdoMet) from methionine and ATP. The overall synthetic reaction is composed of two sequential steps, AdoMet formation and the subsequent tripolyphosphate hydrolysis which occurs prior to release of AdoMet from the enzyme.</text>
</comment>
<comment type="catalytic activity">
    <reaction evidence="1">
        <text>L-methionine + ATP + H2O = S-adenosyl-L-methionine + phosphate + diphosphate</text>
        <dbReference type="Rhea" id="RHEA:21080"/>
        <dbReference type="ChEBI" id="CHEBI:15377"/>
        <dbReference type="ChEBI" id="CHEBI:30616"/>
        <dbReference type="ChEBI" id="CHEBI:33019"/>
        <dbReference type="ChEBI" id="CHEBI:43474"/>
        <dbReference type="ChEBI" id="CHEBI:57844"/>
        <dbReference type="ChEBI" id="CHEBI:59789"/>
        <dbReference type="EC" id="2.5.1.6"/>
    </reaction>
</comment>
<comment type="cofactor">
    <cofactor evidence="1">
        <name>Mg(2+)</name>
        <dbReference type="ChEBI" id="CHEBI:18420"/>
    </cofactor>
    <text evidence="1">Binds 2 divalent ions per subunit.</text>
</comment>
<comment type="cofactor">
    <cofactor evidence="1">
        <name>K(+)</name>
        <dbReference type="ChEBI" id="CHEBI:29103"/>
    </cofactor>
    <text evidence="1">Binds 1 potassium ion per subunit.</text>
</comment>
<comment type="pathway">
    <text evidence="1">Amino-acid biosynthesis; S-adenosyl-L-methionine biosynthesis; S-adenosyl-L-methionine from L-methionine: step 1/1.</text>
</comment>
<comment type="subunit">
    <text evidence="1">Homotetramer; dimer of dimers.</text>
</comment>
<comment type="subcellular location">
    <subcellularLocation>
        <location evidence="1">Cytoplasm</location>
    </subcellularLocation>
</comment>
<comment type="similarity">
    <text evidence="1">Belongs to the AdoMet synthase family.</text>
</comment>
<reference key="1">
    <citation type="submission" date="2009-04" db="EMBL/GenBank/DDBJ databases">
        <title>Genome sequence of Bacillus anthracis A0248.</title>
        <authorList>
            <person name="Dodson R.J."/>
            <person name="Munk A.C."/>
            <person name="Bruce D."/>
            <person name="Detter C."/>
            <person name="Tapia R."/>
            <person name="Sutton G."/>
            <person name="Sims D."/>
            <person name="Brettin T."/>
        </authorList>
    </citation>
    <scope>NUCLEOTIDE SEQUENCE [LARGE SCALE GENOMIC DNA]</scope>
    <source>
        <strain>A0248</strain>
    </source>
</reference>
<proteinExistence type="inferred from homology"/>
<dbReference type="EC" id="2.5.1.6" evidence="1"/>
<dbReference type="EMBL" id="CP001598">
    <property type="protein sequence ID" value="ACQ47015.1"/>
    <property type="molecule type" value="Genomic_DNA"/>
</dbReference>
<dbReference type="RefSeq" id="WP_000163125.1">
    <property type="nucleotide sequence ID" value="NC_012659.1"/>
</dbReference>
<dbReference type="SMR" id="C3PCC4"/>
<dbReference type="GeneID" id="75087933"/>
<dbReference type="KEGG" id="bai:BAA_5031"/>
<dbReference type="HOGENOM" id="CLU_041802_1_1_9"/>
<dbReference type="UniPathway" id="UPA00315">
    <property type="reaction ID" value="UER00080"/>
</dbReference>
<dbReference type="GO" id="GO:0005737">
    <property type="term" value="C:cytoplasm"/>
    <property type="evidence" value="ECO:0007669"/>
    <property type="project" value="UniProtKB-SubCell"/>
</dbReference>
<dbReference type="GO" id="GO:0005524">
    <property type="term" value="F:ATP binding"/>
    <property type="evidence" value="ECO:0007669"/>
    <property type="project" value="UniProtKB-UniRule"/>
</dbReference>
<dbReference type="GO" id="GO:0000287">
    <property type="term" value="F:magnesium ion binding"/>
    <property type="evidence" value="ECO:0007669"/>
    <property type="project" value="UniProtKB-UniRule"/>
</dbReference>
<dbReference type="GO" id="GO:0004478">
    <property type="term" value="F:methionine adenosyltransferase activity"/>
    <property type="evidence" value="ECO:0007669"/>
    <property type="project" value="UniProtKB-UniRule"/>
</dbReference>
<dbReference type="GO" id="GO:0006730">
    <property type="term" value="P:one-carbon metabolic process"/>
    <property type="evidence" value="ECO:0007669"/>
    <property type="project" value="UniProtKB-KW"/>
</dbReference>
<dbReference type="GO" id="GO:0006556">
    <property type="term" value="P:S-adenosylmethionine biosynthetic process"/>
    <property type="evidence" value="ECO:0007669"/>
    <property type="project" value="UniProtKB-UniRule"/>
</dbReference>
<dbReference type="CDD" id="cd18079">
    <property type="entry name" value="S-AdoMet_synt"/>
    <property type="match status" value="1"/>
</dbReference>
<dbReference type="FunFam" id="3.30.300.10:FF:000003">
    <property type="entry name" value="S-adenosylmethionine synthase"/>
    <property type="match status" value="1"/>
</dbReference>
<dbReference type="FunFam" id="3.30.300.10:FF:000004">
    <property type="entry name" value="S-adenosylmethionine synthase"/>
    <property type="match status" value="1"/>
</dbReference>
<dbReference type="Gene3D" id="3.30.300.10">
    <property type="match status" value="3"/>
</dbReference>
<dbReference type="HAMAP" id="MF_00086">
    <property type="entry name" value="S_AdoMet_synth1"/>
    <property type="match status" value="1"/>
</dbReference>
<dbReference type="InterPro" id="IPR022631">
    <property type="entry name" value="ADOMET_SYNTHASE_CS"/>
</dbReference>
<dbReference type="InterPro" id="IPR022630">
    <property type="entry name" value="S-AdoMet_synt_C"/>
</dbReference>
<dbReference type="InterPro" id="IPR022629">
    <property type="entry name" value="S-AdoMet_synt_central"/>
</dbReference>
<dbReference type="InterPro" id="IPR022628">
    <property type="entry name" value="S-AdoMet_synt_N"/>
</dbReference>
<dbReference type="InterPro" id="IPR002133">
    <property type="entry name" value="S-AdoMet_synthetase"/>
</dbReference>
<dbReference type="InterPro" id="IPR022636">
    <property type="entry name" value="S-AdoMet_synthetase_sfam"/>
</dbReference>
<dbReference type="NCBIfam" id="TIGR01034">
    <property type="entry name" value="metK"/>
    <property type="match status" value="1"/>
</dbReference>
<dbReference type="PANTHER" id="PTHR11964">
    <property type="entry name" value="S-ADENOSYLMETHIONINE SYNTHETASE"/>
    <property type="match status" value="1"/>
</dbReference>
<dbReference type="Pfam" id="PF02773">
    <property type="entry name" value="S-AdoMet_synt_C"/>
    <property type="match status" value="1"/>
</dbReference>
<dbReference type="Pfam" id="PF02772">
    <property type="entry name" value="S-AdoMet_synt_M"/>
    <property type="match status" value="1"/>
</dbReference>
<dbReference type="Pfam" id="PF00438">
    <property type="entry name" value="S-AdoMet_synt_N"/>
    <property type="match status" value="1"/>
</dbReference>
<dbReference type="PIRSF" id="PIRSF000497">
    <property type="entry name" value="MAT"/>
    <property type="match status" value="1"/>
</dbReference>
<dbReference type="SUPFAM" id="SSF55973">
    <property type="entry name" value="S-adenosylmethionine synthetase"/>
    <property type="match status" value="3"/>
</dbReference>
<dbReference type="PROSITE" id="PS00376">
    <property type="entry name" value="ADOMET_SYNTHASE_1"/>
    <property type="match status" value="1"/>
</dbReference>
<dbReference type="PROSITE" id="PS00377">
    <property type="entry name" value="ADOMET_SYNTHASE_2"/>
    <property type="match status" value="1"/>
</dbReference>
<evidence type="ECO:0000255" key="1">
    <source>
        <dbReference type="HAMAP-Rule" id="MF_00086"/>
    </source>
</evidence>
<protein>
    <recommendedName>
        <fullName evidence="1">S-adenosylmethionine synthase</fullName>
        <shortName evidence="1">AdoMet synthase</shortName>
        <ecNumber evidence="1">2.5.1.6</ecNumber>
    </recommendedName>
    <alternativeName>
        <fullName evidence="1">MAT</fullName>
    </alternativeName>
    <alternativeName>
        <fullName evidence="1">Methionine adenosyltransferase</fullName>
    </alternativeName>
</protein>
<sequence length="399" mass="43263">MTKKRHLFTSESVTEGHPDKICDQISDSILDAILSKDANARVACETTVTTGLVLVAGEITTSTYVDIPKIVRETIQGIGYTRAKYGFDAETCAVLTSIDEQSADIAMGVDQALEAREGQMTDAEIEAIGAGDQGLMFGFACNETQELMPLPISLAHKLARRLTEVRKNDTLSYLRPDGKTQVTVEYDENGKPVRVDTIVISTQHHPDVTWEEIDRDLKEHVIKAVVPAELIDGETKFFINPTGRFVIGGPQGDAGLTGRKIIVDTYGGYARHGGGAFSGKDATKVDRSAAYAARYVAKNIVAAGLAEKAEVQLAYAIGVAQPVSISVDTFGTGKVSEDVLVELVRNNFDLRPAGIIKMLDLRRPIYKQTAAYGHFGRTDVDLSWERTDKAAALKEQAGL</sequence>
<feature type="chain" id="PRO_1000196682" description="S-adenosylmethionine synthase">
    <location>
        <begin position="1"/>
        <end position="399"/>
    </location>
</feature>
<feature type="region of interest" description="Flexible loop" evidence="1">
    <location>
        <begin position="101"/>
        <end position="111"/>
    </location>
</feature>
<feature type="binding site" description="in other chain" evidence="1">
    <location>
        <position position="17"/>
    </location>
    <ligand>
        <name>ATP</name>
        <dbReference type="ChEBI" id="CHEBI:30616"/>
        <note>ligand shared between two neighboring subunits</note>
    </ligand>
</feature>
<feature type="binding site" evidence="1">
    <location>
        <position position="19"/>
    </location>
    <ligand>
        <name>Mg(2+)</name>
        <dbReference type="ChEBI" id="CHEBI:18420"/>
    </ligand>
</feature>
<feature type="binding site" evidence="1">
    <location>
        <position position="45"/>
    </location>
    <ligand>
        <name>K(+)</name>
        <dbReference type="ChEBI" id="CHEBI:29103"/>
    </ligand>
</feature>
<feature type="binding site" description="in other chain" evidence="1">
    <location>
        <position position="58"/>
    </location>
    <ligand>
        <name>L-methionine</name>
        <dbReference type="ChEBI" id="CHEBI:57844"/>
        <note>ligand shared between two neighboring subunits</note>
    </ligand>
</feature>
<feature type="binding site" description="in other chain" evidence="1">
    <location>
        <position position="101"/>
    </location>
    <ligand>
        <name>L-methionine</name>
        <dbReference type="ChEBI" id="CHEBI:57844"/>
        <note>ligand shared between two neighboring subunits</note>
    </ligand>
</feature>
<feature type="binding site" description="in other chain" evidence="1">
    <location>
        <begin position="177"/>
        <end position="179"/>
    </location>
    <ligand>
        <name>ATP</name>
        <dbReference type="ChEBI" id="CHEBI:30616"/>
        <note>ligand shared between two neighboring subunits</note>
    </ligand>
</feature>
<feature type="binding site" description="in other chain" evidence="1">
    <location>
        <begin position="244"/>
        <end position="245"/>
    </location>
    <ligand>
        <name>ATP</name>
        <dbReference type="ChEBI" id="CHEBI:30616"/>
        <note>ligand shared between two neighboring subunits</note>
    </ligand>
</feature>
<feature type="binding site" evidence="1">
    <location>
        <position position="253"/>
    </location>
    <ligand>
        <name>ATP</name>
        <dbReference type="ChEBI" id="CHEBI:30616"/>
        <note>ligand shared between two neighboring subunits</note>
    </ligand>
</feature>
<feature type="binding site" evidence="1">
    <location>
        <position position="253"/>
    </location>
    <ligand>
        <name>L-methionine</name>
        <dbReference type="ChEBI" id="CHEBI:57844"/>
        <note>ligand shared between two neighboring subunits</note>
    </ligand>
</feature>
<feature type="binding site" description="in other chain" evidence="1">
    <location>
        <begin position="259"/>
        <end position="260"/>
    </location>
    <ligand>
        <name>ATP</name>
        <dbReference type="ChEBI" id="CHEBI:30616"/>
        <note>ligand shared between two neighboring subunits</note>
    </ligand>
</feature>
<feature type="binding site" evidence="1">
    <location>
        <position position="276"/>
    </location>
    <ligand>
        <name>ATP</name>
        <dbReference type="ChEBI" id="CHEBI:30616"/>
        <note>ligand shared between two neighboring subunits</note>
    </ligand>
</feature>
<feature type="binding site" evidence="1">
    <location>
        <position position="280"/>
    </location>
    <ligand>
        <name>ATP</name>
        <dbReference type="ChEBI" id="CHEBI:30616"/>
        <note>ligand shared between two neighboring subunits</note>
    </ligand>
</feature>
<feature type="binding site" description="in other chain" evidence="1">
    <location>
        <position position="284"/>
    </location>
    <ligand>
        <name>L-methionine</name>
        <dbReference type="ChEBI" id="CHEBI:57844"/>
        <note>ligand shared between two neighboring subunits</note>
    </ligand>
</feature>
<gene>
    <name evidence="1" type="primary">metK</name>
    <name type="ordered locus">BAA_5031</name>
</gene>
<name>METK_BACAA</name>
<keyword id="KW-0067">ATP-binding</keyword>
<keyword id="KW-0963">Cytoplasm</keyword>
<keyword id="KW-0460">Magnesium</keyword>
<keyword id="KW-0479">Metal-binding</keyword>
<keyword id="KW-0547">Nucleotide-binding</keyword>
<keyword id="KW-0554">One-carbon metabolism</keyword>
<keyword id="KW-0630">Potassium</keyword>
<keyword id="KW-0808">Transferase</keyword>
<organism>
    <name type="scientific">Bacillus anthracis (strain A0248)</name>
    <dbReference type="NCBI Taxonomy" id="592021"/>
    <lineage>
        <taxon>Bacteria</taxon>
        <taxon>Bacillati</taxon>
        <taxon>Bacillota</taxon>
        <taxon>Bacilli</taxon>
        <taxon>Bacillales</taxon>
        <taxon>Bacillaceae</taxon>
        <taxon>Bacillus</taxon>
        <taxon>Bacillus cereus group</taxon>
    </lineage>
</organism>
<accession>C3PCC4</accession>